<name>MC132_MCV1</name>
<reference key="1">
    <citation type="journal article" date="1996" name="Science">
        <title>Genome sequence of a human tumorigenic poxvirus: prediction of specific host response-evasion genes.</title>
        <authorList>
            <person name="Senkevich T.G."/>
            <person name="Bugert J.J."/>
            <person name="Sisler J.R."/>
            <person name="Koonin E.V."/>
            <person name="Darai G."/>
            <person name="Moss B."/>
        </authorList>
    </citation>
    <scope>NUCLEOTIDE SEQUENCE [LARGE SCALE GENOMIC DNA]</scope>
</reference>
<reference key="2">
    <citation type="journal article" date="2017" name="J. Gen. Virol.">
        <title>Recombination events and variability among full-length genomes of co-circulating molluscum contagiosum virus subtypes 1 and 2.</title>
        <authorList>
            <person name="Lopez-Bueno A."/>
            <person name="Parras-Molto M."/>
            <person name="Lopez-Barrantes O."/>
            <person name="Belda S."/>
            <person name="Alejo A."/>
        </authorList>
    </citation>
    <scope>NUCLEOTIDE SEQUENCE [LARGE SCALE GENOMIC DNA]</scope>
</reference>
<reference key="3">
    <citation type="journal article" date="2015" name="J. Virol.">
        <title>Poxvirus protein MC132 from molluscum contagiosum virus inhibits NF-B activation by targeting p65 for degradation.</title>
        <authorList>
            <person name="Brady G."/>
            <person name="Haas D.A."/>
            <person name="Farrell P.J."/>
            <person name="Pichlmair A."/>
            <person name="Bowie A.G."/>
        </authorList>
    </citation>
    <scope>FUNCTION</scope>
    <scope>SUBCELLULAR LOCATION</scope>
    <scope>INTERACTION WITH HOST RELA; CUL5; ELOB AND ELOC</scope>
</reference>
<gene>
    <name type="primary">MC132</name>
</gene>
<organismHost>
    <name type="scientific">Homo sapiens</name>
    <name type="common">Human</name>
    <dbReference type="NCBI Taxonomy" id="9606"/>
</organismHost>
<keyword id="KW-1035">Host cytoplasm</keyword>
<keyword id="KW-0945">Host-virus interaction</keyword>
<keyword id="KW-1100">Inhibition of host NF-kappa-B by virus</keyword>
<keyword id="KW-1185">Reference proteome</keyword>
<evidence type="ECO:0000269" key="1">
    <source>
    </source>
</evidence>
<dbReference type="EMBL" id="U60315">
    <property type="protein sequence ID" value="AAC55260.1"/>
    <property type="molecule type" value="Genomic_DNA"/>
</dbReference>
<dbReference type="EMBL" id="KY040275">
    <property type="protein sequence ID" value="AQY16881.1"/>
    <property type="molecule type" value="Genomic_DNA"/>
</dbReference>
<dbReference type="EMBL" id="KY040276">
    <property type="protein sequence ID" value="AQY17060.1"/>
    <property type="molecule type" value="Genomic_DNA"/>
</dbReference>
<dbReference type="EMBL" id="KY040277">
    <property type="protein sequence ID" value="AQY17239.1"/>
    <property type="molecule type" value="Genomic_DNA"/>
</dbReference>
<dbReference type="PIR" id="T30734">
    <property type="entry name" value="T30734"/>
</dbReference>
<dbReference type="KEGG" id="vg:1487151"/>
<dbReference type="Proteomes" id="UP000000869">
    <property type="component" value="Genome"/>
</dbReference>
<dbReference type="GO" id="GO:0030430">
    <property type="term" value="C:host cell cytoplasm"/>
    <property type="evidence" value="ECO:0007669"/>
    <property type="project" value="UniProtKB-SubCell"/>
</dbReference>
<dbReference type="GO" id="GO:0085034">
    <property type="term" value="P:symbiont-mediated suppression of host NF-kappaB cascade"/>
    <property type="evidence" value="ECO:0000314"/>
    <property type="project" value="UniProtKB"/>
</dbReference>
<protein>
    <recommendedName>
        <fullName>Protein MC132</fullName>
    </recommendedName>
</protein>
<sequence>MMNFSDPCLLGPSACNEDFFEELAREILPTPEAKALAARLLRRLGWHPSEGQCSWCPEAYEYLYDLQFRYTGPVPLVRKHPGSALIVRWMLDGLGHFLFCRPRVQGNPLTYHLSCMGSAIRTLELFREQAHSHLWEQGNLVDCYWSCSSDYGYEGKWGQQAVVRGALSGPWPRPDPPSLQLQCLCAIWRTCLLRGQSQAQKYTNWICARHLQLRPDTSTRDSDLLLQRC</sequence>
<feature type="chain" id="PRO_0000444798" description="Protein MC132">
    <location>
        <begin position="1"/>
        <end position="229"/>
    </location>
</feature>
<proteinExistence type="evidence at protein level"/>
<accession>Q98298</accession>
<comment type="function">
    <text evidence="1">Inhibits host NF-kappa-B activation stimulated by IL-1 and multiple PRR viral detection pathways. Targets host NF-kappa-B component RELA/p65 for ubiquitin-dependent proteasomal degradation.</text>
</comment>
<comment type="subunit">
    <text evidence="1">Interacts with host RELA (via RHD domain), ELOB, ELOC and CUL5; these interactions induce the proteasomal degradation of host RELA.</text>
</comment>
<comment type="subcellular location">
    <subcellularLocation>
        <location evidence="1">Host cytoplasm</location>
    </subcellularLocation>
</comment>
<organism>
    <name type="scientific">Molluscum contagiosum virus subtype 1</name>
    <name type="common">MOCV</name>
    <name type="synonym">MCVI</name>
    <dbReference type="NCBI Taxonomy" id="10280"/>
    <lineage>
        <taxon>Viruses</taxon>
        <taxon>Varidnaviria</taxon>
        <taxon>Bamfordvirae</taxon>
        <taxon>Nucleocytoviricota</taxon>
        <taxon>Pokkesviricetes</taxon>
        <taxon>Chitovirales</taxon>
        <taxon>Poxviridae</taxon>
        <taxon>Chordopoxvirinae</taxon>
        <taxon>Molluscipoxvirus</taxon>
        <taxon>Molluscum contagiosum virus</taxon>
    </lineage>
</organism>